<feature type="chain" id="PRO_0000230048" description="Glutamate 5-kinase">
    <location>
        <begin position="1"/>
        <end position="379"/>
    </location>
</feature>
<feature type="domain" description="PUA" evidence="1">
    <location>
        <begin position="281"/>
        <end position="358"/>
    </location>
</feature>
<feature type="binding site" evidence="1">
    <location>
        <position position="15"/>
    </location>
    <ligand>
        <name>ATP</name>
        <dbReference type="ChEBI" id="CHEBI:30616"/>
    </ligand>
</feature>
<feature type="binding site" evidence="1">
    <location>
        <position position="56"/>
    </location>
    <ligand>
        <name>substrate</name>
    </ligand>
</feature>
<feature type="binding site" evidence="1">
    <location>
        <position position="143"/>
    </location>
    <ligand>
        <name>substrate</name>
    </ligand>
</feature>
<feature type="binding site" evidence="1">
    <location>
        <position position="155"/>
    </location>
    <ligand>
        <name>substrate</name>
    </ligand>
</feature>
<feature type="binding site" evidence="1">
    <location>
        <begin position="175"/>
        <end position="176"/>
    </location>
    <ligand>
        <name>ATP</name>
        <dbReference type="ChEBI" id="CHEBI:30616"/>
    </ligand>
</feature>
<organism>
    <name type="scientific">Nitrobacter winogradskyi (strain ATCC 25391 / DSM 10237 / CIP 104748 / NCIMB 11846 / Nb-255)</name>
    <dbReference type="NCBI Taxonomy" id="323098"/>
    <lineage>
        <taxon>Bacteria</taxon>
        <taxon>Pseudomonadati</taxon>
        <taxon>Pseudomonadota</taxon>
        <taxon>Alphaproteobacteria</taxon>
        <taxon>Hyphomicrobiales</taxon>
        <taxon>Nitrobacteraceae</taxon>
        <taxon>Nitrobacter</taxon>
    </lineage>
</organism>
<dbReference type="EC" id="2.7.2.11" evidence="1"/>
<dbReference type="EMBL" id="CP000115">
    <property type="protein sequence ID" value="ABA03710.1"/>
    <property type="molecule type" value="Genomic_DNA"/>
</dbReference>
<dbReference type="RefSeq" id="WP_011313774.1">
    <property type="nucleotide sequence ID" value="NC_007406.1"/>
</dbReference>
<dbReference type="SMR" id="Q3SVI1"/>
<dbReference type="STRING" id="323098.Nwi_0443"/>
<dbReference type="KEGG" id="nwi:Nwi_0443"/>
<dbReference type="eggNOG" id="COG0263">
    <property type="taxonomic scope" value="Bacteria"/>
</dbReference>
<dbReference type="HOGENOM" id="CLU_025400_2_0_5"/>
<dbReference type="OrthoDB" id="9804434at2"/>
<dbReference type="UniPathway" id="UPA00098">
    <property type="reaction ID" value="UER00359"/>
</dbReference>
<dbReference type="Proteomes" id="UP000002531">
    <property type="component" value="Chromosome"/>
</dbReference>
<dbReference type="GO" id="GO:0005829">
    <property type="term" value="C:cytosol"/>
    <property type="evidence" value="ECO:0007669"/>
    <property type="project" value="TreeGrafter"/>
</dbReference>
<dbReference type="GO" id="GO:0005524">
    <property type="term" value="F:ATP binding"/>
    <property type="evidence" value="ECO:0007669"/>
    <property type="project" value="UniProtKB-KW"/>
</dbReference>
<dbReference type="GO" id="GO:0004349">
    <property type="term" value="F:glutamate 5-kinase activity"/>
    <property type="evidence" value="ECO:0007669"/>
    <property type="project" value="UniProtKB-UniRule"/>
</dbReference>
<dbReference type="GO" id="GO:0003723">
    <property type="term" value="F:RNA binding"/>
    <property type="evidence" value="ECO:0007669"/>
    <property type="project" value="InterPro"/>
</dbReference>
<dbReference type="GO" id="GO:0055129">
    <property type="term" value="P:L-proline biosynthetic process"/>
    <property type="evidence" value="ECO:0007669"/>
    <property type="project" value="UniProtKB-UniRule"/>
</dbReference>
<dbReference type="CDD" id="cd04242">
    <property type="entry name" value="AAK_G5K_ProB"/>
    <property type="match status" value="1"/>
</dbReference>
<dbReference type="CDD" id="cd21157">
    <property type="entry name" value="PUA_G5K"/>
    <property type="match status" value="1"/>
</dbReference>
<dbReference type="FunFam" id="2.30.130.10:FF:000007">
    <property type="entry name" value="Glutamate 5-kinase"/>
    <property type="match status" value="1"/>
</dbReference>
<dbReference type="FunFam" id="3.40.1160.10:FF:000018">
    <property type="entry name" value="Glutamate 5-kinase"/>
    <property type="match status" value="1"/>
</dbReference>
<dbReference type="Gene3D" id="3.40.1160.10">
    <property type="entry name" value="Acetylglutamate kinase-like"/>
    <property type="match status" value="1"/>
</dbReference>
<dbReference type="Gene3D" id="2.30.130.10">
    <property type="entry name" value="PUA domain"/>
    <property type="match status" value="1"/>
</dbReference>
<dbReference type="HAMAP" id="MF_00456">
    <property type="entry name" value="ProB"/>
    <property type="match status" value="1"/>
</dbReference>
<dbReference type="InterPro" id="IPR036393">
    <property type="entry name" value="AceGlu_kinase-like_sf"/>
</dbReference>
<dbReference type="InterPro" id="IPR001048">
    <property type="entry name" value="Asp/Glu/Uridylate_kinase"/>
</dbReference>
<dbReference type="InterPro" id="IPR041739">
    <property type="entry name" value="G5K_ProB"/>
</dbReference>
<dbReference type="InterPro" id="IPR001057">
    <property type="entry name" value="Glu/AcGlu_kinase"/>
</dbReference>
<dbReference type="InterPro" id="IPR011529">
    <property type="entry name" value="Glu_5kinase"/>
</dbReference>
<dbReference type="InterPro" id="IPR005715">
    <property type="entry name" value="Glu_5kinase/COase_Synthase"/>
</dbReference>
<dbReference type="InterPro" id="IPR019797">
    <property type="entry name" value="Glutamate_5-kinase_CS"/>
</dbReference>
<dbReference type="InterPro" id="IPR002478">
    <property type="entry name" value="PUA"/>
</dbReference>
<dbReference type="InterPro" id="IPR015947">
    <property type="entry name" value="PUA-like_sf"/>
</dbReference>
<dbReference type="InterPro" id="IPR036974">
    <property type="entry name" value="PUA_sf"/>
</dbReference>
<dbReference type="NCBIfam" id="TIGR01027">
    <property type="entry name" value="proB"/>
    <property type="match status" value="1"/>
</dbReference>
<dbReference type="PANTHER" id="PTHR43654">
    <property type="entry name" value="GLUTAMATE 5-KINASE"/>
    <property type="match status" value="1"/>
</dbReference>
<dbReference type="PANTHER" id="PTHR43654:SF1">
    <property type="entry name" value="ISOPENTENYL PHOSPHATE KINASE"/>
    <property type="match status" value="1"/>
</dbReference>
<dbReference type="Pfam" id="PF00696">
    <property type="entry name" value="AA_kinase"/>
    <property type="match status" value="1"/>
</dbReference>
<dbReference type="Pfam" id="PF01472">
    <property type="entry name" value="PUA"/>
    <property type="match status" value="1"/>
</dbReference>
<dbReference type="PIRSF" id="PIRSF000729">
    <property type="entry name" value="GK"/>
    <property type="match status" value="1"/>
</dbReference>
<dbReference type="PRINTS" id="PR00474">
    <property type="entry name" value="GLU5KINASE"/>
</dbReference>
<dbReference type="SMART" id="SM00359">
    <property type="entry name" value="PUA"/>
    <property type="match status" value="1"/>
</dbReference>
<dbReference type="SUPFAM" id="SSF53633">
    <property type="entry name" value="Carbamate kinase-like"/>
    <property type="match status" value="1"/>
</dbReference>
<dbReference type="SUPFAM" id="SSF88697">
    <property type="entry name" value="PUA domain-like"/>
    <property type="match status" value="1"/>
</dbReference>
<dbReference type="PROSITE" id="PS00902">
    <property type="entry name" value="GLUTAMATE_5_KINASE"/>
    <property type="match status" value="1"/>
</dbReference>
<dbReference type="PROSITE" id="PS50890">
    <property type="entry name" value="PUA"/>
    <property type="match status" value="1"/>
</dbReference>
<comment type="function">
    <text evidence="1">Catalyzes the transfer of a phosphate group to glutamate to form L-glutamate 5-phosphate.</text>
</comment>
<comment type="catalytic activity">
    <reaction evidence="1">
        <text>L-glutamate + ATP = L-glutamyl 5-phosphate + ADP</text>
        <dbReference type="Rhea" id="RHEA:14877"/>
        <dbReference type="ChEBI" id="CHEBI:29985"/>
        <dbReference type="ChEBI" id="CHEBI:30616"/>
        <dbReference type="ChEBI" id="CHEBI:58274"/>
        <dbReference type="ChEBI" id="CHEBI:456216"/>
        <dbReference type="EC" id="2.7.2.11"/>
    </reaction>
</comment>
<comment type="pathway">
    <text evidence="1">Amino-acid biosynthesis; L-proline biosynthesis; L-glutamate 5-semialdehyde from L-glutamate: step 1/2.</text>
</comment>
<comment type="subcellular location">
    <subcellularLocation>
        <location evidence="1">Cytoplasm</location>
    </subcellularLocation>
</comment>
<comment type="similarity">
    <text evidence="1">Belongs to the glutamate 5-kinase family.</text>
</comment>
<keyword id="KW-0028">Amino-acid biosynthesis</keyword>
<keyword id="KW-0067">ATP-binding</keyword>
<keyword id="KW-0963">Cytoplasm</keyword>
<keyword id="KW-0418">Kinase</keyword>
<keyword id="KW-0547">Nucleotide-binding</keyword>
<keyword id="KW-0641">Proline biosynthesis</keyword>
<keyword id="KW-1185">Reference proteome</keyword>
<keyword id="KW-0808">Transferase</keyword>
<reference key="1">
    <citation type="journal article" date="2006" name="Appl. Environ. Microbiol.">
        <title>Genome sequence of the chemolithoautotrophic nitrite-oxidizing bacterium Nitrobacter winogradskyi Nb-255.</title>
        <authorList>
            <person name="Starkenburg S.R."/>
            <person name="Chain P.S.G."/>
            <person name="Sayavedra-Soto L.A."/>
            <person name="Hauser L."/>
            <person name="Land M.L."/>
            <person name="Larimer F.W."/>
            <person name="Malfatti S.A."/>
            <person name="Klotz M.G."/>
            <person name="Bottomley P.J."/>
            <person name="Arp D.J."/>
            <person name="Hickey W.J."/>
        </authorList>
    </citation>
    <scope>NUCLEOTIDE SEQUENCE [LARGE SCALE GENOMIC DNA]</scope>
    <source>
        <strain>ATCC 25391 / DSM 10237 / CIP 104748 / NCIMB 11846 / Nb-255</strain>
    </source>
</reference>
<name>PROB_NITWN</name>
<evidence type="ECO:0000255" key="1">
    <source>
        <dbReference type="HAMAP-Rule" id="MF_00456"/>
    </source>
</evidence>
<sequence>MTRPHLKKFRRIVVKVGSSLLIDSAAGKVRGEWLSALAADIAGLHGDGCDVLVVSSGAVALGRSKLKLPRGPLKLEESQAAAAVGQIALARIWSKVLADHGIGAGQILVTWQDTEERRRYLNARSTIAKLLEWRAVPVINENDTVATNEIRYGDNDRLAARVATMASADLLILLSDIDGLYDAPPHLNPDAKLITVVKRVTADIEAMAGSAASELSRGGMRTKIEAAKIATTAGTHMLIASGTIEHPLRAIMDGGPCTWFLTPANPVTARKRWIAGSLEPRGTLAIDAGAVAALRAGKSLLPAGVTRIDGHFARGDAVIVRGPNGHEIGRGLVAYDAADADRIKGRSSSDAAQLLGVRGRVEMIHRDDLVVGGPLGDSA</sequence>
<accession>Q3SVI1</accession>
<protein>
    <recommendedName>
        <fullName evidence="1">Glutamate 5-kinase</fullName>
        <ecNumber evidence="1">2.7.2.11</ecNumber>
    </recommendedName>
    <alternativeName>
        <fullName evidence="1">Gamma-glutamyl kinase</fullName>
        <shortName evidence="1">GK</shortName>
    </alternativeName>
</protein>
<proteinExistence type="inferred from homology"/>
<gene>
    <name evidence="1" type="primary">proB</name>
    <name type="ordered locus">Nwi_0443</name>
</gene>